<feature type="chain" id="PRO_0000348713" description="tRNA-cytidine(32) 2-sulfurtransferase">
    <location>
        <begin position="1"/>
        <end position="287"/>
    </location>
</feature>
<feature type="short sequence motif" description="PP-loop motif" evidence="1">
    <location>
        <begin position="58"/>
        <end position="63"/>
    </location>
</feature>
<feature type="binding site" evidence="1">
    <location>
        <position position="133"/>
    </location>
    <ligand>
        <name>[4Fe-4S] cluster</name>
        <dbReference type="ChEBI" id="CHEBI:49883"/>
    </ligand>
</feature>
<feature type="binding site" evidence="1">
    <location>
        <position position="136"/>
    </location>
    <ligand>
        <name>[4Fe-4S] cluster</name>
        <dbReference type="ChEBI" id="CHEBI:49883"/>
    </ligand>
</feature>
<feature type="binding site" evidence="1">
    <location>
        <position position="224"/>
    </location>
    <ligand>
        <name>[4Fe-4S] cluster</name>
        <dbReference type="ChEBI" id="CHEBI:49883"/>
    </ligand>
</feature>
<protein>
    <recommendedName>
        <fullName evidence="1">tRNA-cytidine(32) 2-sulfurtransferase</fullName>
        <ecNumber evidence="1">2.8.1.-</ecNumber>
    </recommendedName>
    <alternativeName>
        <fullName evidence="1">Two-thiocytidine biosynthesis protein A</fullName>
    </alternativeName>
    <alternativeName>
        <fullName evidence="1">tRNA 2-thiocytidine biosynthesis protein TtcA</fullName>
    </alternativeName>
</protein>
<accession>A8LMA2</accession>
<organism>
    <name type="scientific">Dinoroseobacter shibae (strain DSM 16493 / NCIMB 14021 / DFL 12)</name>
    <dbReference type="NCBI Taxonomy" id="398580"/>
    <lineage>
        <taxon>Bacteria</taxon>
        <taxon>Pseudomonadati</taxon>
        <taxon>Pseudomonadota</taxon>
        <taxon>Alphaproteobacteria</taxon>
        <taxon>Rhodobacterales</taxon>
        <taxon>Roseobacteraceae</taxon>
        <taxon>Dinoroseobacter</taxon>
    </lineage>
</organism>
<dbReference type="EC" id="2.8.1.-" evidence="1"/>
<dbReference type="EMBL" id="CP000830">
    <property type="protein sequence ID" value="ABV92079.1"/>
    <property type="molecule type" value="Genomic_DNA"/>
</dbReference>
<dbReference type="RefSeq" id="WP_012177009.1">
    <property type="nucleotide sequence ID" value="NC_009952.1"/>
</dbReference>
<dbReference type="SMR" id="A8LMA2"/>
<dbReference type="STRING" id="398580.Dshi_0330"/>
<dbReference type="KEGG" id="dsh:Dshi_0330"/>
<dbReference type="eggNOG" id="COG0037">
    <property type="taxonomic scope" value="Bacteria"/>
</dbReference>
<dbReference type="HOGENOM" id="CLU_026481_0_0_5"/>
<dbReference type="OrthoDB" id="9801054at2"/>
<dbReference type="Proteomes" id="UP000006833">
    <property type="component" value="Chromosome"/>
</dbReference>
<dbReference type="GO" id="GO:0005737">
    <property type="term" value="C:cytoplasm"/>
    <property type="evidence" value="ECO:0007669"/>
    <property type="project" value="UniProtKB-SubCell"/>
</dbReference>
<dbReference type="GO" id="GO:0051539">
    <property type="term" value="F:4 iron, 4 sulfur cluster binding"/>
    <property type="evidence" value="ECO:0007669"/>
    <property type="project" value="UniProtKB-UniRule"/>
</dbReference>
<dbReference type="GO" id="GO:0005524">
    <property type="term" value="F:ATP binding"/>
    <property type="evidence" value="ECO:0007669"/>
    <property type="project" value="UniProtKB-UniRule"/>
</dbReference>
<dbReference type="GO" id="GO:0000287">
    <property type="term" value="F:magnesium ion binding"/>
    <property type="evidence" value="ECO:0007669"/>
    <property type="project" value="UniProtKB-UniRule"/>
</dbReference>
<dbReference type="GO" id="GO:0016783">
    <property type="term" value="F:sulfurtransferase activity"/>
    <property type="evidence" value="ECO:0007669"/>
    <property type="project" value="UniProtKB-UniRule"/>
</dbReference>
<dbReference type="GO" id="GO:0000049">
    <property type="term" value="F:tRNA binding"/>
    <property type="evidence" value="ECO:0007669"/>
    <property type="project" value="UniProtKB-KW"/>
</dbReference>
<dbReference type="GO" id="GO:0034227">
    <property type="term" value="P:tRNA thio-modification"/>
    <property type="evidence" value="ECO:0007669"/>
    <property type="project" value="UniProtKB-UniRule"/>
</dbReference>
<dbReference type="CDD" id="cd24138">
    <property type="entry name" value="TtcA-like"/>
    <property type="match status" value="1"/>
</dbReference>
<dbReference type="Gene3D" id="3.40.50.620">
    <property type="entry name" value="HUPs"/>
    <property type="match status" value="1"/>
</dbReference>
<dbReference type="HAMAP" id="MF_01850">
    <property type="entry name" value="TtcA"/>
    <property type="match status" value="1"/>
</dbReference>
<dbReference type="InterPro" id="IPR014729">
    <property type="entry name" value="Rossmann-like_a/b/a_fold"/>
</dbReference>
<dbReference type="InterPro" id="IPR011063">
    <property type="entry name" value="TilS/TtcA_N"/>
</dbReference>
<dbReference type="InterPro" id="IPR012089">
    <property type="entry name" value="tRNA_Cyd_32_2_STrfase"/>
</dbReference>
<dbReference type="InterPro" id="IPR035107">
    <property type="entry name" value="tRNA_thiolation_TtcA_Ctu1"/>
</dbReference>
<dbReference type="NCBIfam" id="NF007972">
    <property type="entry name" value="PRK10696.1"/>
    <property type="match status" value="1"/>
</dbReference>
<dbReference type="PANTHER" id="PTHR43686:SF1">
    <property type="entry name" value="AMINOTRAN_5 DOMAIN-CONTAINING PROTEIN"/>
    <property type="match status" value="1"/>
</dbReference>
<dbReference type="PANTHER" id="PTHR43686">
    <property type="entry name" value="SULFURTRANSFERASE-RELATED"/>
    <property type="match status" value="1"/>
</dbReference>
<dbReference type="Pfam" id="PF01171">
    <property type="entry name" value="ATP_bind_3"/>
    <property type="match status" value="1"/>
</dbReference>
<dbReference type="PIRSF" id="PIRSF004976">
    <property type="entry name" value="ATPase_YdaO"/>
    <property type="match status" value="1"/>
</dbReference>
<dbReference type="SUPFAM" id="SSF52402">
    <property type="entry name" value="Adenine nucleotide alpha hydrolases-like"/>
    <property type="match status" value="1"/>
</dbReference>
<name>TTCA_DINSH</name>
<sequence>MLDDADIHPLFHNAPGTTEFKKLRKRIIRNVREAIDLYGMVEREAREGTKPRWLVCLSGGKDSYTLLAALTELQWRGLLPVEILACNLDQGQPGFPATVLPEFLERMGVPHRIEYQDTYSIVMDKVPAGRTYCALCSRLRRGNLYRIAREEGCSAVLLGHHRDDILETFFMNLFHGGRLATMPPKLVNEEGDLFVLRPLAHVAEADCARFAKALDYPIIPCDLCGSQDGLQRQQVKALLDGWEANSPGRRQVMFKALTNIRPSHMLDPNLFDFAGLGLADAFSENPK</sequence>
<proteinExistence type="inferred from homology"/>
<keyword id="KW-0004">4Fe-4S</keyword>
<keyword id="KW-0067">ATP-binding</keyword>
<keyword id="KW-0963">Cytoplasm</keyword>
<keyword id="KW-0408">Iron</keyword>
<keyword id="KW-0411">Iron-sulfur</keyword>
<keyword id="KW-0460">Magnesium</keyword>
<keyword id="KW-0479">Metal-binding</keyword>
<keyword id="KW-0547">Nucleotide-binding</keyword>
<keyword id="KW-1185">Reference proteome</keyword>
<keyword id="KW-0694">RNA-binding</keyword>
<keyword id="KW-0808">Transferase</keyword>
<keyword id="KW-0819">tRNA processing</keyword>
<keyword id="KW-0820">tRNA-binding</keyword>
<reference key="1">
    <citation type="journal article" date="2010" name="ISME J.">
        <title>The complete genome sequence of the algal symbiont Dinoroseobacter shibae: a hitchhiker's guide to life in the sea.</title>
        <authorList>
            <person name="Wagner-Dobler I."/>
            <person name="Ballhausen B."/>
            <person name="Berger M."/>
            <person name="Brinkhoff T."/>
            <person name="Buchholz I."/>
            <person name="Bunk B."/>
            <person name="Cypionka H."/>
            <person name="Daniel R."/>
            <person name="Drepper T."/>
            <person name="Gerdts G."/>
            <person name="Hahnke S."/>
            <person name="Han C."/>
            <person name="Jahn D."/>
            <person name="Kalhoefer D."/>
            <person name="Kiss H."/>
            <person name="Klenk H.P."/>
            <person name="Kyrpides N."/>
            <person name="Liebl W."/>
            <person name="Liesegang H."/>
            <person name="Meincke L."/>
            <person name="Pati A."/>
            <person name="Petersen J."/>
            <person name="Piekarski T."/>
            <person name="Pommerenke C."/>
            <person name="Pradella S."/>
            <person name="Pukall R."/>
            <person name="Rabus R."/>
            <person name="Stackebrandt E."/>
            <person name="Thole S."/>
            <person name="Thompson L."/>
            <person name="Tielen P."/>
            <person name="Tomasch J."/>
            <person name="von Jan M."/>
            <person name="Wanphrut N."/>
            <person name="Wichels A."/>
            <person name="Zech H."/>
            <person name="Simon M."/>
        </authorList>
    </citation>
    <scope>NUCLEOTIDE SEQUENCE [LARGE SCALE GENOMIC DNA]</scope>
    <source>
        <strain>DSM 16493 / NCIMB 14021 / DFL 12</strain>
    </source>
</reference>
<gene>
    <name evidence="1" type="primary">ttcA</name>
    <name type="ordered locus">Dshi_0330</name>
</gene>
<evidence type="ECO:0000255" key="1">
    <source>
        <dbReference type="HAMAP-Rule" id="MF_01850"/>
    </source>
</evidence>
<comment type="function">
    <text evidence="1">Catalyzes the ATP-dependent 2-thiolation of cytidine in position 32 of tRNA, to form 2-thiocytidine (s(2)C32). The sulfur atoms are provided by the cysteine/cysteine desulfurase (IscS) system.</text>
</comment>
<comment type="catalytic activity">
    <reaction evidence="1">
        <text>cytidine(32) in tRNA + S-sulfanyl-L-cysteinyl-[cysteine desulfurase] + AH2 + ATP = 2-thiocytidine(32) in tRNA + L-cysteinyl-[cysteine desulfurase] + A + AMP + diphosphate + H(+)</text>
        <dbReference type="Rhea" id="RHEA:57048"/>
        <dbReference type="Rhea" id="RHEA-COMP:10288"/>
        <dbReference type="Rhea" id="RHEA-COMP:12157"/>
        <dbReference type="Rhea" id="RHEA-COMP:12158"/>
        <dbReference type="Rhea" id="RHEA-COMP:14821"/>
        <dbReference type="ChEBI" id="CHEBI:13193"/>
        <dbReference type="ChEBI" id="CHEBI:15378"/>
        <dbReference type="ChEBI" id="CHEBI:17499"/>
        <dbReference type="ChEBI" id="CHEBI:29950"/>
        <dbReference type="ChEBI" id="CHEBI:30616"/>
        <dbReference type="ChEBI" id="CHEBI:33019"/>
        <dbReference type="ChEBI" id="CHEBI:61963"/>
        <dbReference type="ChEBI" id="CHEBI:82748"/>
        <dbReference type="ChEBI" id="CHEBI:141453"/>
        <dbReference type="ChEBI" id="CHEBI:456215"/>
    </reaction>
    <physiologicalReaction direction="left-to-right" evidence="1">
        <dbReference type="Rhea" id="RHEA:57049"/>
    </physiologicalReaction>
</comment>
<comment type="cofactor">
    <cofactor evidence="1">
        <name>Mg(2+)</name>
        <dbReference type="ChEBI" id="CHEBI:18420"/>
    </cofactor>
</comment>
<comment type="cofactor">
    <cofactor evidence="1">
        <name>[4Fe-4S] cluster</name>
        <dbReference type="ChEBI" id="CHEBI:49883"/>
    </cofactor>
    <text evidence="1">Binds 1 [4Fe-4S] cluster per subunit. The cluster is chelated by three Cys residues, the fourth Fe has a free coordination site that may bind a sulfur atom transferred from the persulfide of IscS.</text>
</comment>
<comment type="pathway">
    <text evidence="1">tRNA modification.</text>
</comment>
<comment type="subunit">
    <text evidence="1">Homodimer.</text>
</comment>
<comment type="subcellular location">
    <subcellularLocation>
        <location evidence="1">Cytoplasm</location>
    </subcellularLocation>
</comment>
<comment type="miscellaneous">
    <text evidence="1">The thiolation reaction likely consists of two steps: a first activation step by ATP to form an adenylated intermediate of the target base of tRNA, and a second nucleophilic substitution step of the sulfur (S) atom supplied by the hydrosulfide attached to the Fe-S cluster.</text>
</comment>
<comment type="similarity">
    <text evidence="1">Belongs to the TtcA family.</text>
</comment>